<feature type="chain" id="PRO_0000369334" description="Molybdopterin synthase catalytic subunit">
    <location>
        <begin position="1"/>
        <end position="367"/>
    </location>
</feature>
<feature type="binding site" evidence="2">
    <location>
        <begin position="101"/>
        <end position="102"/>
    </location>
    <ligand>
        <name>substrate</name>
    </ligand>
</feature>
<feature type="binding site" evidence="2">
    <location>
        <position position="117"/>
    </location>
    <ligand>
        <name>substrate</name>
    </ligand>
</feature>
<feature type="binding site" evidence="2">
    <location>
        <begin position="124"/>
        <end position="126"/>
    </location>
    <ligand>
        <name>substrate</name>
    </ligand>
</feature>
<name>MOC2B_DROER</name>
<proteinExistence type="inferred from homology"/>
<organism>
    <name type="scientific">Drosophila erecta</name>
    <name type="common">Fruit fly</name>
    <dbReference type="NCBI Taxonomy" id="7220"/>
    <lineage>
        <taxon>Eukaryota</taxon>
        <taxon>Metazoa</taxon>
        <taxon>Ecdysozoa</taxon>
        <taxon>Arthropoda</taxon>
        <taxon>Hexapoda</taxon>
        <taxon>Insecta</taxon>
        <taxon>Pterygota</taxon>
        <taxon>Neoptera</taxon>
        <taxon>Endopterygota</taxon>
        <taxon>Diptera</taxon>
        <taxon>Brachycera</taxon>
        <taxon>Muscomorpha</taxon>
        <taxon>Ephydroidea</taxon>
        <taxon>Drosophilidae</taxon>
        <taxon>Drosophila</taxon>
        <taxon>Sophophora</taxon>
    </lineage>
</organism>
<evidence type="ECO:0000250" key="1">
    <source>
        <dbReference type="UniProtKB" id="Q9VBX2"/>
    </source>
</evidence>
<evidence type="ECO:0000255" key="2">
    <source>
        <dbReference type="HAMAP-Rule" id="MF_03052"/>
    </source>
</evidence>
<gene>
    <name evidence="1" type="primary">Mocs2B</name>
    <name evidence="2" type="synonym">Mocs2</name>
    <name type="ORF">GG12284</name>
</gene>
<comment type="function">
    <text evidence="2">Catalytic subunit of the molybdopterin synthase complex, a complex that catalyzes the conversion of precursor Z into molybdopterin. Acts by mediating the incorporation of 2 sulfur atoms from thiocarboxylated Mocs2A into precursor Z to generate a dithiolene group.</text>
</comment>
<comment type="catalytic activity">
    <reaction evidence="2">
        <text>2 [molybdopterin-synthase sulfur-carrier protein]-C-terminal-Gly-aminoethanethioate + cyclic pyranopterin phosphate + H2O = molybdopterin + 2 [molybdopterin-synthase sulfur-carrier protein]-C-terminal Gly-Gly + 2 H(+)</text>
        <dbReference type="Rhea" id="RHEA:26333"/>
        <dbReference type="Rhea" id="RHEA-COMP:12202"/>
        <dbReference type="Rhea" id="RHEA-COMP:19907"/>
        <dbReference type="ChEBI" id="CHEBI:15377"/>
        <dbReference type="ChEBI" id="CHEBI:15378"/>
        <dbReference type="ChEBI" id="CHEBI:58698"/>
        <dbReference type="ChEBI" id="CHEBI:59648"/>
        <dbReference type="ChEBI" id="CHEBI:90778"/>
        <dbReference type="ChEBI" id="CHEBI:232372"/>
        <dbReference type="EC" id="2.8.1.12"/>
    </reaction>
</comment>
<comment type="pathway">
    <text evidence="2">Cofactor biosynthesis; molybdopterin biosynthesis.</text>
</comment>
<comment type="subunit">
    <text evidence="2">Heterotetramer; composed of 2 small (Mocs2A) and 2 large (Mocs2B) subunits.</text>
</comment>
<comment type="subcellular location">
    <subcellularLocation>
        <location evidence="2">Cytoplasm</location>
    </subcellularLocation>
</comment>
<comment type="miscellaneous">
    <text>This protein is produced by a bicistronic gene which also produces the small subunit (Mocs2A).</text>
</comment>
<comment type="similarity">
    <text evidence="2">Belongs to the MoaE family. MOCS2B subfamily.</text>
</comment>
<reference key="1">
    <citation type="journal article" date="2007" name="Nature">
        <title>Evolution of genes and genomes on the Drosophila phylogeny.</title>
        <authorList>
            <consortium name="Drosophila 12 genomes consortium"/>
        </authorList>
    </citation>
    <scope>NUCLEOTIDE SEQUENCE [LARGE SCALE GENOMIC DNA]</scope>
    <source>
        <strain>Tucson 14021-0224.01</strain>
    </source>
</reference>
<sequence>MDHVKLVNDPIDIAHIHQLLADAGCGASSVFVGTTRDNFQGKKVVSLAYEAYDSMALKEMNKICLDLRSKWPDLKHIVIYHRLGTVPVCEASVVIAASSPHRSEALESVSFAIDQLKTRVPIWKKEIYEGDHVSEWKENKESIRPKRSKSAFNYAACPCKVEESHDVPRTLVQIRVNDAELTKRLECFVNRKRDEINSQNVIDFKSSFVNSDIDLSDSCARTQSTIIKQEQSNCHLKVRRVNNRCGPQQMEMRPNYELELNKLMGSRDGQTDPFKEMRKSLPNSRLQAIESYMCLTTDNEENIFSRIKKVENRLLQLESISPEYRHFTKLEPSSMELPPPKKIRKKSYSVPELSAFIQKIKEGSEFA</sequence>
<accession>B3P6R5</accession>
<protein>
    <recommendedName>
        <fullName evidence="2">Molybdopterin synthase catalytic subunit</fullName>
        <ecNumber evidence="2">2.8.1.12</ecNumber>
    </recommendedName>
    <alternativeName>
        <fullName evidence="2">Molybdenum cofactor synthesis protein 2 large subunit</fullName>
    </alternativeName>
    <alternativeName>
        <fullName evidence="2">Molybdenum cofactor synthesis protein 2B</fullName>
        <shortName evidence="2">MOCS2B</shortName>
    </alternativeName>
</protein>
<keyword id="KW-0963">Cytoplasm</keyword>
<keyword id="KW-0501">Molybdenum cofactor biosynthesis</keyword>
<keyword id="KW-0808">Transferase</keyword>
<dbReference type="EC" id="2.8.1.12" evidence="2"/>
<dbReference type="EMBL" id="CH954182">
    <property type="protein sequence ID" value="EDV53735.1"/>
    <property type="molecule type" value="Genomic_DNA"/>
</dbReference>
<dbReference type="SMR" id="B3P6R5"/>
<dbReference type="EnsemblMetazoa" id="FBtr0132338">
    <property type="protein sequence ID" value="FBpp0130830"/>
    <property type="gene ID" value="FBgn0104575"/>
</dbReference>
<dbReference type="EnsemblMetazoa" id="XM_001981829.3">
    <property type="protein sequence ID" value="XP_001981865.1"/>
    <property type="gene ID" value="LOC6555340"/>
</dbReference>
<dbReference type="GeneID" id="6555340"/>
<dbReference type="KEGG" id="der:6555340"/>
<dbReference type="CTD" id="43017"/>
<dbReference type="eggNOG" id="KOG3307">
    <property type="taxonomic scope" value="Eukaryota"/>
</dbReference>
<dbReference type="HOGENOM" id="CLU_045449_0_0_1"/>
<dbReference type="OMA" id="KIRSQWN"/>
<dbReference type="OrthoDB" id="5531344at2759"/>
<dbReference type="PhylomeDB" id="B3P6R5"/>
<dbReference type="UniPathway" id="UPA00344"/>
<dbReference type="Proteomes" id="UP000008711">
    <property type="component" value="Unassembled WGS sequence"/>
</dbReference>
<dbReference type="GO" id="GO:0140672">
    <property type="term" value="C:ATAC complex"/>
    <property type="evidence" value="ECO:0007669"/>
    <property type="project" value="EnsemblMetazoa"/>
</dbReference>
<dbReference type="GO" id="GO:0005829">
    <property type="term" value="C:cytosol"/>
    <property type="evidence" value="ECO:0000250"/>
    <property type="project" value="UniProtKB"/>
</dbReference>
<dbReference type="GO" id="GO:1990140">
    <property type="term" value="C:molybdopterin synthase complex"/>
    <property type="evidence" value="ECO:0000250"/>
    <property type="project" value="UniProtKB"/>
</dbReference>
<dbReference type="GO" id="GO:0005700">
    <property type="term" value="C:polytene chromosome"/>
    <property type="evidence" value="ECO:0007669"/>
    <property type="project" value="EnsemblMetazoa"/>
</dbReference>
<dbReference type="GO" id="GO:0030366">
    <property type="term" value="F:molybdopterin synthase activity"/>
    <property type="evidence" value="ECO:0007669"/>
    <property type="project" value="UniProtKB-UniRule"/>
</dbReference>
<dbReference type="GO" id="GO:0006338">
    <property type="term" value="P:chromatin remodeling"/>
    <property type="evidence" value="ECO:0007669"/>
    <property type="project" value="EnsemblMetazoa"/>
</dbReference>
<dbReference type="GO" id="GO:0006777">
    <property type="term" value="P:Mo-molybdopterin cofactor biosynthetic process"/>
    <property type="evidence" value="ECO:0000250"/>
    <property type="project" value="UniProtKB"/>
</dbReference>
<dbReference type="CDD" id="cd00756">
    <property type="entry name" value="MoaE"/>
    <property type="match status" value="1"/>
</dbReference>
<dbReference type="FunFam" id="3.90.1170.40:FF:000002">
    <property type="entry name" value="Molybdopterin synthase catalytic subunit"/>
    <property type="match status" value="1"/>
</dbReference>
<dbReference type="Gene3D" id="3.90.1170.40">
    <property type="entry name" value="Molybdopterin biosynthesis MoaE subunit"/>
    <property type="match status" value="1"/>
</dbReference>
<dbReference type="HAMAP" id="MF_03052">
    <property type="entry name" value="MOC2B"/>
    <property type="match status" value="1"/>
</dbReference>
<dbReference type="InterPro" id="IPR036563">
    <property type="entry name" value="MoaE_sf"/>
</dbReference>
<dbReference type="InterPro" id="IPR028888">
    <property type="entry name" value="MOCS2B_euk"/>
</dbReference>
<dbReference type="InterPro" id="IPR003448">
    <property type="entry name" value="Mopterin_biosynth_MoaE"/>
</dbReference>
<dbReference type="PANTHER" id="PTHR23404">
    <property type="entry name" value="MOLYBDOPTERIN SYNTHASE RELATED"/>
    <property type="match status" value="1"/>
</dbReference>
<dbReference type="Pfam" id="PF02391">
    <property type="entry name" value="MoaE"/>
    <property type="match status" value="1"/>
</dbReference>
<dbReference type="SUPFAM" id="SSF54690">
    <property type="entry name" value="Molybdopterin synthase subunit MoaE"/>
    <property type="match status" value="1"/>
</dbReference>